<comment type="function">
    <text evidence="1">Involved in restoring normal CheY-P levels following the addition of attractant by increasing the rate of CheY-P hydrolysis. Is only 6% as active as FliY, which indicates that CheC may function after addition of an attractant to cope with increased levels of CheY-P whereas FliY may function constitutively to remove CheY-P around the flagellar switch to maintain an optimal level of CheY-P. In addition, it was shown to prevent methylation of the methyl-accepting chemotaxis proteins (MCPs). Inhibits CheD.</text>
</comment>
<comment type="subunit">
    <text>Forms a complex with CheD.</text>
</comment>
<comment type="disruption phenotype">
    <text evidence="3">Cells fail to synthesize flagellin protein and grow as long filaments. They do not respond to attractants. CheC mutants showed overmethylation of the MCPs compared with wild-type strain.</text>
</comment>
<comment type="similarity">
    <text evidence="4">Belongs to the CheC family.</text>
</comment>
<evidence type="ECO:0000269" key="1">
    <source>
    </source>
</evidence>
<evidence type="ECO:0000269" key="2">
    <source>
    </source>
</evidence>
<evidence type="ECO:0000269" key="3">
    <source>
    </source>
</evidence>
<evidence type="ECO:0000305" key="4"/>
<accession>P40403</accession>
<proteinExistence type="evidence at protein level"/>
<reference key="1">
    <citation type="journal article" date="1988" name="J. Bacteriol.">
        <title>Cloning, sequencing, and disruption of the Bacillus subtilis sigma 28 gene.</title>
        <authorList>
            <person name="Helmann J.D."/>
            <person name="Marquez L.M."/>
            <person name="Chamberlin M.J."/>
        </authorList>
    </citation>
    <scope>NUCLEOTIDE SEQUENCE [GENOMIC DNA]</scope>
</reference>
<reference key="2">
    <citation type="journal article" date="1997" name="Nature">
        <title>The complete genome sequence of the Gram-positive bacterium Bacillus subtilis.</title>
        <authorList>
            <person name="Kunst F."/>
            <person name="Ogasawara N."/>
            <person name="Moszer I."/>
            <person name="Albertini A.M."/>
            <person name="Alloni G."/>
            <person name="Azevedo V."/>
            <person name="Bertero M.G."/>
            <person name="Bessieres P."/>
            <person name="Bolotin A."/>
            <person name="Borchert S."/>
            <person name="Borriss R."/>
            <person name="Boursier L."/>
            <person name="Brans A."/>
            <person name="Braun M."/>
            <person name="Brignell S.C."/>
            <person name="Bron S."/>
            <person name="Brouillet S."/>
            <person name="Bruschi C.V."/>
            <person name="Caldwell B."/>
            <person name="Capuano V."/>
            <person name="Carter N.M."/>
            <person name="Choi S.-K."/>
            <person name="Codani J.-J."/>
            <person name="Connerton I.F."/>
            <person name="Cummings N.J."/>
            <person name="Daniel R.A."/>
            <person name="Denizot F."/>
            <person name="Devine K.M."/>
            <person name="Duesterhoeft A."/>
            <person name="Ehrlich S.D."/>
            <person name="Emmerson P.T."/>
            <person name="Entian K.-D."/>
            <person name="Errington J."/>
            <person name="Fabret C."/>
            <person name="Ferrari E."/>
            <person name="Foulger D."/>
            <person name="Fritz C."/>
            <person name="Fujita M."/>
            <person name="Fujita Y."/>
            <person name="Fuma S."/>
            <person name="Galizzi A."/>
            <person name="Galleron N."/>
            <person name="Ghim S.-Y."/>
            <person name="Glaser P."/>
            <person name="Goffeau A."/>
            <person name="Golightly E.J."/>
            <person name="Grandi G."/>
            <person name="Guiseppi G."/>
            <person name="Guy B.J."/>
            <person name="Haga K."/>
            <person name="Haiech J."/>
            <person name="Harwood C.R."/>
            <person name="Henaut A."/>
            <person name="Hilbert H."/>
            <person name="Holsappel S."/>
            <person name="Hosono S."/>
            <person name="Hullo M.-F."/>
            <person name="Itaya M."/>
            <person name="Jones L.-M."/>
            <person name="Joris B."/>
            <person name="Karamata D."/>
            <person name="Kasahara Y."/>
            <person name="Klaerr-Blanchard M."/>
            <person name="Klein C."/>
            <person name="Kobayashi Y."/>
            <person name="Koetter P."/>
            <person name="Koningstein G."/>
            <person name="Krogh S."/>
            <person name="Kumano M."/>
            <person name="Kurita K."/>
            <person name="Lapidus A."/>
            <person name="Lardinois S."/>
            <person name="Lauber J."/>
            <person name="Lazarevic V."/>
            <person name="Lee S.-M."/>
            <person name="Levine A."/>
            <person name="Liu H."/>
            <person name="Masuda S."/>
            <person name="Mauel C."/>
            <person name="Medigue C."/>
            <person name="Medina N."/>
            <person name="Mellado R.P."/>
            <person name="Mizuno M."/>
            <person name="Moestl D."/>
            <person name="Nakai S."/>
            <person name="Noback M."/>
            <person name="Noone D."/>
            <person name="O'Reilly M."/>
            <person name="Ogawa K."/>
            <person name="Ogiwara A."/>
            <person name="Oudega B."/>
            <person name="Park S.-H."/>
            <person name="Parro V."/>
            <person name="Pohl T.M."/>
            <person name="Portetelle D."/>
            <person name="Porwollik S."/>
            <person name="Prescott A.M."/>
            <person name="Presecan E."/>
            <person name="Pujic P."/>
            <person name="Purnelle B."/>
            <person name="Rapoport G."/>
            <person name="Rey M."/>
            <person name="Reynolds S."/>
            <person name="Rieger M."/>
            <person name="Rivolta C."/>
            <person name="Rocha E."/>
            <person name="Roche B."/>
            <person name="Rose M."/>
            <person name="Sadaie Y."/>
            <person name="Sato T."/>
            <person name="Scanlan E."/>
            <person name="Schleich S."/>
            <person name="Schroeter R."/>
            <person name="Scoffone F."/>
            <person name="Sekiguchi J."/>
            <person name="Sekowska A."/>
            <person name="Seror S.J."/>
            <person name="Serror P."/>
            <person name="Shin B.-S."/>
            <person name="Soldo B."/>
            <person name="Sorokin A."/>
            <person name="Tacconi E."/>
            <person name="Takagi T."/>
            <person name="Takahashi H."/>
            <person name="Takemaru K."/>
            <person name="Takeuchi M."/>
            <person name="Tamakoshi A."/>
            <person name="Tanaka T."/>
            <person name="Terpstra P."/>
            <person name="Tognoni A."/>
            <person name="Tosato V."/>
            <person name="Uchiyama S."/>
            <person name="Vandenbol M."/>
            <person name="Vannier F."/>
            <person name="Vassarotti A."/>
            <person name="Viari A."/>
            <person name="Wambutt R."/>
            <person name="Wedler E."/>
            <person name="Wedler H."/>
            <person name="Weitzenegger T."/>
            <person name="Winters P."/>
            <person name="Wipat A."/>
            <person name="Yamamoto H."/>
            <person name="Yamane K."/>
            <person name="Yasumoto K."/>
            <person name="Yata K."/>
            <person name="Yoshida K."/>
            <person name="Yoshikawa H.-F."/>
            <person name="Zumstein E."/>
            <person name="Yoshikawa H."/>
            <person name="Danchin A."/>
        </authorList>
    </citation>
    <scope>NUCLEOTIDE SEQUENCE [LARGE SCALE GENOMIC DNA]</scope>
    <source>
        <strain>168</strain>
    </source>
</reference>
<reference key="3">
    <citation type="journal article" date="1995" name="Biochemistry">
        <title>Chemotactic methylation and behavior in Bacillus subtilis: role of two unique proteins, CheC and CheD.</title>
        <authorList>
            <person name="Rosario M.M.L."/>
            <person name="Kirby J.R."/>
            <person name="Bochar D.A."/>
            <person name="Ordal G.W."/>
        </authorList>
    </citation>
    <scope>DISRUPTION PHENOTYPE</scope>
</reference>
<reference key="4">
    <citation type="journal article" date="1996" name="Mol. Microbiol.">
        <title>CheC and CheD interact to regulate methylation of Bacillus subtilis methyl-accepting chemotaxis proteins.</title>
        <authorList>
            <person name="Rosario M.M.L."/>
            <person name="Ordal G.W."/>
        </authorList>
    </citation>
    <scope>INTERACTION WITH CHED</scope>
</reference>
<reference key="5">
    <citation type="journal article" date="2004" name="J. Biol. Chem.">
        <title>Bacillus subtilis CheC and FliY are members of a novel class of CheY-P-hydrolyzing proteins in the chemotactic signal transduction cascade.</title>
        <authorList>
            <person name="Szurmant H."/>
            <person name="Muff T.J."/>
            <person name="Ordal G.W."/>
        </authorList>
    </citation>
    <scope>FUNCTION</scope>
</reference>
<reference key="6">
    <citation type="journal article" date="2006" name="Cell">
        <title>A receptor-modifying deamidase in complex with a signaling phosphatase reveals reciprocal regulation.</title>
        <authorList>
            <person name="Chao X."/>
            <person name="Muff T.J."/>
            <person name="Park S.-Y."/>
            <person name="Zhang S."/>
            <person name="Pollard A.M."/>
            <person name="Ordal G.W."/>
            <person name="Bilwes A.M."/>
            <person name="Crane B.R."/>
        </authorList>
    </citation>
    <scope>MUTAGENESIS OF ASP-149</scope>
</reference>
<dbReference type="EC" id="3.-.-.-"/>
<dbReference type="EMBL" id="M20144">
    <property type="protein sequence ID" value="AAA61468.1"/>
    <property type="molecule type" value="Genomic_DNA"/>
</dbReference>
<dbReference type="EMBL" id="AL009126">
    <property type="protein sequence ID" value="CAB13518.1"/>
    <property type="molecule type" value="Genomic_DNA"/>
</dbReference>
<dbReference type="PIR" id="A55216">
    <property type="entry name" value="A55216"/>
</dbReference>
<dbReference type="RefSeq" id="NP_389527.1">
    <property type="nucleotide sequence ID" value="NC_000964.3"/>
</dbReference>
<dbReference type="RefSeq" id="WP_003231935.1">
    <property type="nucleotide sequence ID" value="NZ_OZ025638.1"/>
</dbReference>
<dbReference type="SMR" id="P40403"/>
<dbReference type="FunCoup" id="P40403">
    <property type="interactions" value="64"/>
</dbReference>
<dbReference type="IntAct" id="P40403">
    <property type="interactions" value="3"/>
</dbReference>
<dbReference type="STRING" id="224308.BSU16450"/>
<dbReference type="PaxDb" id="224308-BSU16450"/>
<dbReference type="EnsemblBacteria" id="CAB13518">
    <property type="protein sequence ID" value="CAB13518"/>
    <property type="gene ID" value="BSU_16450"/>
</dbReference>
<dbReference type="GeneID" id="86873845"/>
<dbReference type="GeneID" id="939621"/>
<dbReference type="KEGG" id="bsu:BSU16450"/>
<dbReference type="PATRIC" id="fig|224308.179.peg.1786"/>
<dbReference type="eggNOG" id="COG1776">
    <property type="taxonomic scope" value="Bacteria"/>
</dbReference>
<dbReference type="InParanoid" id="P40403"/>
<dbReference type="OrthoDB" id="9812187at2"/>
<dbReference type="PhylomeDB" id="P40403"/>
<dbReference type="BioCyc" id="BSUB:BSU16450-MONOMER"/>
<dbReference type="Proteomes" id="UP000001570">
    <property type="component" value="Chromosome"/>
</dbReference>
<dbReference type="GO" id="GO:0016787">
    <property type="term" value="F:hydrolase activity"/>
    <property type="evidence" value="ECO:0007669"/>
    <property type="project" value="UniProtKB-KW"/>
</dbReference>
<dbReference type="GO" id="GO:0050918">
    <property type="term" value="P:positive chemotaxis"/>
    <property type="evidence" value="ECO:0000315"/>
    <property type="project" value="CACAO"/>
</dbReference>
<dbReference type="CDD" id="cd17909">
    <property type="entry name" value="CheC_ClassI"/>
    <property type="match status" value="1"/>
</dbReference>
<dbReference type="Gene3D" id="3.40.1550.10">
    <property type="entry name" value="CheC-like"/>
    <property type="match status" value="1"/>
</dbReference>
<dbReference type="InterPro" id="IPR007597">
    <property type="entry name" value="CheC"/>
</dbReference>
<dbReference type="InterPro" id="IPR028976">
    <property type="entry name" value="CheC-like_sf"/>
</dbReference>
<dbReference type="InterPro" id="IPR050992">
    <property type="entry name" value="CheZ_family_phosphatases"/>
</dbReference>
<dbReference type="PANTHER" id="PTHR43693">
    <property type="entry name" value="PROTEIN PHOSPHATASE CHEZ"/>
    <property type="match status" value="1"/>
</dbReference>
<dbReference type="PANTHER" id="PTHR43693:SF1">
    <property type="entry name" value="PROTEIN PHOSPHATASE CHEZ"/>
    <property type="match status" value="1"/>
</dbReference>
<dbReference type="Pfam" id="PF04509">
    <property type="entry name" value="CheC"/>
    <property type="match status" value="2"/>
</dbReference>
<dbReference type="SUPFAM" id="SSF103039">
    <property type="entry name" value="CheC-like"/>
    <property type="match status" value="1"/>
</dbReference>
<gene>
    <name type="primary">cheC</name>
    <name type="synonym">ylxJ</name>
    <name type="ordered locus">BSU16450</name>
</gene>
<feature type="chain" id="PRO_0000089638" description="CheY-P phosphatase CheC">
    <location>
        <begin position="1"/>
        <end position="209"/>
    </location>
</feature>
<feature type="mutagenesis site" description="Impaired chemotaxis. No binding to CheD. Almost no enhancement of CheC activity by CheD." evidence="2">
    <original>D</original>
    <variation>K</variation>
    <location>
        <position position="149"/>
    </location>
</feature>
<keyword id="KW-0145">Chemotaxis</keyword>
<keyword id="KW-0378">Hydrolase</keyword>
<keyword id="KW-1185">Reference proteome</keyword>
<organism>
    <name type="scientific">Bacillus subtilis (strain 168)</name>
    <dbReference type="NCBI Taxonomy" id="224308"/>
    <lineage>
        <taxon>Bacteria</taxon>
        <taxon>Bacillati</taxon>
        <taxon>Bacillota</taxon>
        <taxon>Bacilli</taxon>
        <taxon>Bacillales</taxon>
        <taxon>Bacillaceae</taxon>
        <taxon>Bacillus</taxon>
    </lineage>
</organism>
<protein>
    <recommendedName>
        <fullName>CheY-P phosphatase CheC</fullName>
        <ecNumber>3.-.-.-</ecNumber>
    </recommendedName>
</protein>
<name>CHEC_BACSU</name>
<sequence>MSIFNGIKEEQMDILREVGNIGAGHSASAMAQLLNRKIDMEVPFAKLLSFDELVDFFGGADVPVASIFLRMEGDLTGSMFFIMPFFQAEQFIRELIGNPDFDIEDLGEDHMSSSALHELGNILAGSYLTALADLTKLQLYPSVPEVSLDMFGAVISEGLMELSQVGEHAIVVDTSIFDQSHQQELKAHMFMLPDYDSFEKLFVALGASL</sequence>